<gene>
    <name evidence="1" type="primary">truA</name>
    <name type="ordered locus">LAF_1484</name>
</gene>
<dbReference type="EC" id="5.4.99.12" evidence="1"/>
<dbReference type="EMBL" id="AP008937">
    <property type="protein sequence ID" value="BAG27820.1"/>
    <property type="molecule type" value="Genomic_DNA"/>
</dbReference>
<dbReference type="RefSeq" id="WP_012391586.1">
    <property type="nucleotide sequence ID" value="NC_010610.1"/>
</dbReference>
<dbReference type="SMR" id="B2GDT8"/>
<dbReference type="KEGG" id="lfe:LAF_1484"/>
<dbReference type="PATRIC" id="fig|334390.5.peg.1630"/>
<dbReference type="eggNOG" id="COG0101">
    <property type="taxonomic scope" value="Bacteria"/>
</dbReference>
<dbReference type="HOGENOM" id="CLU_014673_0_1_9"/>
<dbReference type="Proteomes" id="UP000001697">
    <property type="component" value="Chromosome"/>
</dbReference>
<dbReference type="GO" id="GO:0003723">
    <property type="term" value="F:RNA binding"/>
    <property type="evidence" value="ECO:0007669"/>
    <property type="project" value="InterPro"/>
</dbReference>
<dbReference type="GO" id="GO:0160147">
    <property type="term" value="F:tRNA pseudouridine(38-40) synthase activity"/>
    <property type="evidence" value="ECO:0007669"/>
    <property type="project" value="UniProtKB-EC"/>
</dbReference>
<dbReference type="GO" id="GO:0031119">
    <property type="term" value="P:tRNA pseudouridine synthesis"/>
    <property type="evidence" value="ECO:0007669"/>
    <property type="project" value="UniProtKB-UniRule"/>
</dbReference>
<dbReference type="CDD" id="cd02570">
    <property type="entry name" value="PseudoU_synth_EcTruA"/>
    <property type="match status" value="1"/>
</dbReference>
<dbReference type="FunFam" id="3.30.70.580:FF:000001">
    <property type="entry name" value="tRNA pseudouridine synthase A"/>
    <property type="match status" value="1"/>
</dbReference>
<dbReference type="Gene3D" id="3.30.70.660">
    <property type="entry name" value="Pseudouridine synthase I, catalytic domain, C-terminal subdomain"/>
    <property type="match status" value="1"/>
</dbReference>
<dbReference type="Gene3D" id="3.30.70.580">
    <property type="entry name" value="Pseudouridine synthase I, catalytic domain, N-terminal subdomain"/>
    <property type="match status" value="1"/>
</dbReference>
<dbReference type="HAMAP" id="MF_00171">
    <property type="entry name" value="TruA"/>
    <property type="match status" value="1"/>
</dbReference>
<dbReference type="InterPro" id="IPR020103">
    <property type="entry name" value="PsdUridine_synth_cat_dom_sf"/>
</dbReference>
<dbReference type="InterPro" id="IPR001406">
    <property type="entry name" value="PsdUridine_synth_TruA"/>
</dbReference>
<dbReference type="InterPro" id="IPR020097">
    <property type="entry name" value="PsdUridine_synth_TruA_a/b_dom"/>
</dbReference>
<dbReference type="InterPro" id="IPR020095">
    <property type="entry name" value="PsdUridine_synth_TruA_C"/>
</dbReference>
<dbReference type="InterPro" id="IPR020094">
    <property type="entry name" value="TruA/RsuA/RluB/E/F_N"/>
</dbReference>
<dbReference type="NCBIfam" id="TIGR00071">
    <property type="entry name" value="hisT_truA"/>
    <property type="match status" value="1"/>
</dbReference>
<dbReference type="PANTHER" id="PTHR11142">
    <property type="entry name" value="PSEUDOURIDYLATE SYNTHASE"/>
    <property type="match status" value="1"/>
</dbReference>
<dbReference type="PANTHER" id="PTHR11142:SF0">
    <property type="entry name" value="TRNA PSEUDOURIDINE SYNTHASE-LIKE 1"/>
    <property type="match status" value="1"/>
</dbReference>
<dbReference type="Pfam" id="PF01416">
    <property type="entry name" value="PseudoU_synth_1"/>
    <property type="match status" value="2"/>
</dbReference>
<dbReference type="PIRSF" id="PIRSF001430">
    <property type="entry name" value="tRNA_psdUrid_synth"/>
    <property type="match status" value="1"/>
</dbReference>
<dbReference type="SUPFAM" id="SSF55120">
    <property type="entry name" value="Pseudouridine synthase"/>
    <property type="match status" value="1"/>
</dbReference>
<keyword id="KW-0413">Isomerase</keyword>
<keyword id="KW-1185">Reference proteome</keyword>
<keyword id="KW-0819">tRNA processing</keyword>
<organism>
    <name type="scientific">Limosilactobacillus fermentum (strain NBRC 3956 / LMG 18251)</name>
    <name type="common">Lactobacillus fermentum</name>
    <dbReference type="NCBI Taxonomy" id="334390"/>
    <lineage>
        <taxon>Bacteria</taxon>
        <taxon>Bacillati</taxon>
        <taxon>Bacillota</taxon>
        <taxon>Bacilli</taxon>
        <taxon>Lactobacillales</taxon>
        <taxon>Lactobacillaceae</taxon>
        <taxon>Limosilactobacillus</taxon>
    </lineage>
</organism>
<accession>B2GDT8</accession>
<comment type="function">
    <text evidence="1">Formation of pseudouridine at positions 38, 39 and 40 in the anticodon stem and loop of transfer RNAs.</text>
</comment>
<comment type="catalytic activity">
    <reaction evidence="1">
        <text>uridine(38/39/40) in tRNA = pseudouridine(38/39/40) in tRNA</text>
        <dbReference type="Rhea" id="RHEA:22376"/>
        <dbReference type="Rhea" id="RHEA-COMP:10085"/>
        <dbReference type="Rhea" id="RHEA-COMP:10087"/>
        <dbReference type="ChEBI" id="CHEBI:65314"/>
        <dbReference type="ChEBI" id="CHEBI:65315"/>
        <dbReference type="EC" id="5.4.99.12"/>
    </reaction>
</comment>
<comment type="subunit">
    <text evidence="1">Homodimer.</text>
</comment>
<comment type="similarity">
    <text evidence="1">Belongs to the tRNA pseudouridine synthase TruA family.</text>
</comment>
<sequence>MHRYKITFAYDGSNFAGFQIQPGERTVQQVLERAVNKIAKKPQPPLMVFGSGRTDAGVHALGQVAHFDLPYQIPGPSLVRALNSSLPLDVLVKEATEVAPDFHARFDAHHKRYRYRVVGGEFTNPFKRNYTGHYKYPVDVERMQTAAQDFVGEHDFTSFVASGSQATSNVRRIDEVTVVRDEENDEVVFDFVGNGFLYNQVRIMVAFLLEIGNGRRPVDDVMRVMKAKNRDLARGTAPASGLYLVEVTYDSPANSQND</sequence>
<feature type="chain" id="PRO_1000097753" description="tRNA pseudouridine synthase A">
    <location>
        <begin position="1"/>
        <end position="258"/>
    </location>
</feature>
<feature type="active site" description="Nucleophile" evidence="1">
    <location>
        <position position="55"/>
    </location>
</feature>
<feature type="binding site" evidence="1">
    <location>
        <position position="113"/>
    </location>
    <ligand>
        <name>substrate</name>
    </ligand>
</feature>
<reference key="1">
    <citation type="journal article" date="2008" name="DNA Res.">
        <title>Comparative genome analysis of Lactobacillus reuteri and Lactobacillus fermentum reveal a genomic island for reuterin and cobalamin production.</title>
        <authorList>
            <person name="Morita H."/>
            <person name="Toh H."/>
            <person name="Fukuda S."/>
            <person name="Horikawa H."/>
            <person name="Oshima K."/>
            <person name="Suzuki T."/>
            <person name="Murakami M."/>
            <person name="Hisamatsu S."/>
            <person name="Kato Y."/>
            <person name="Takizawa T."/>
            <person name="Fukuoka H."/>
            <person name="Yoshimura T."/>
            <person name="Itoh K."/>
            <person name="O'Sullivan D.J."/>
            <person name="McKay L.L."/>
            <person name="Ohno H."/>
            <person name="Kikuchi J."/>
            <person name="Masaoka T."/>
            <person name="Hattori M."/>
        </authorList>
    </citation>
    <scope>NUCLEOTIDE SEQUENCE [LARGE SCALE GENOMIC DNA]</scope>
    <source>
        <strain>NBRC 3956 / LMG 18251</strain>
    </source>
</reference>
<protein>
    <recommendedName>
        <fullName evidence="1">tRNA pseudouridine synthase A</fullName>
        <ecNumber evidence="1">5.4.99.12</ecNumber>
    </recommendedName>
    <alternativeName>
        <fullName evidence="1">tRNA pseudouridine(38-40) synthase</fullName>
    </alternativeName>
    <alternativeName>
        <fullName evidence="1">tRNA pseudouridylate synthase I</fullName>
    </alternativeName>
    <alternativeName>
        <fullName evidence="1">tRNA-uridine isomerase I</fullName>
    </alternativeName>
</protein>
<proteinExistence type="inferred from homology"/>
<name>TRUA_LIMF3</name>
<evidence type="ECO:0000255" key="1">
    <source>
        <dbReference type="HAMAP-Rule" id="MF_00171"/>
    </source>
</evidence>